<keyword id="KW-0028">Amino-acid biosynthesis</keyword>
<keyword id="KW-0963">Cytoplasm</keyword>
<keyword id="KW-0413">Isomerase</keyword>
<keyword id="KW-0486">Methionine biosynthesis</keyword>
<keyword id="KW-0539">Nucleus</keyword>
<keyword id="KW-1185">Reference proteome</keyword>
<gene>
    <name type="primary">mri1</name>
    <name type="ORF">PMAA_046370</name>
</gene>
<comment type="function">
    <text evidence="1">Catalyzes the interconversion of methylthioribose-1-phosphate (MTR-1-P) into methylthioribulose-1-phosphate (MTRu-1-P).</text>
</comment>
<comment type="catalytic activity">
    <reaction evidence="1">
        <text>5-(methylsulfanyl)-alpha-D-ribose 1-phosphate = 5-(methylsulfanyl)-D-ribulose 1-phosphate</text>
        <dbReference type="Rhea" id="RHEA:19989"/>
        <dbReference type="ChEBI" id="CHEBI:58533"/>
        <dbReference type="ChEBI" id="CHEBI:58548"/>
        <dbReference type="EC" id="5.3.1.23"/>
    </reaction>
</comment>
<comment type="pathway">
    <text evidence="1">Amino-acid biosynthesis; L-methionine biosynthesis via salvage pathway; L-methionine from S-methyl-5-thio-alpha-D-ribose 1-phosphate: step 1/6.</text>
</comment>
<comment type="subcellular location">
    <subcellularLocation>
        <location evidence="1">Cytoplasm</location>
    </subcellularLocation>
    <subcellularLocation>
        <location evidence="1">Nucleus</location>
    </subcellularLocation>
</comment>
<comment type="similarity">
    <text evidence="1">Belongs to the eIF-2B alpha/beta/delta subunits family. MtnA subfamily.</text>
</comment>
<feature type="chain" id="PRO_0000402040" description="Methylthioribose-1-phosphate isomerase">
    <location>
        <begin position="1"/>
        <end position="384"/>
    </location>
</feature>
<feature type="active site" description="Proton donor" evidence="1">
    <location>
        <position position="255"/>
    </location>
</feature>
<feature type="site" description="Transition state stabilizer" evidence="1">
    <location>
        <position position="173"/>
    </location>
</feature>
<organism>
    <name type="scientific">Talaromyces marneffei (strain ATCC 18224 / CBS 334.59 / QM 7333)</name>
    <name type="common">Penicillium marneffei</name>
    <dbReference type="NCBI Taxonomy" id="441960"/>
    <lineage>
        <taxon>Eukaryota</taxon>
        <taxon>Fungi</taxon>
        <taxon>Dikarya</taxon>
        <taxon>Ascomycota</taxon>
        <taxon>Pezizomycotina</taxon>
        <taxon>Eurotiomycetes</taxon>
        <taxon>Eurotiomycetidae</taxon>
        <taxon>Eurotiales</taxon>
        <taxon>Trichocomaceae</taxon>
        <taxon>Talaromyces</taxon>
        <taxon>Talaromyces sect. Talaromyces</taxon>
    </lineage>
</organism>
<evidence type="ECO:0000255" key="1">
    <source>
        <dbReference type="HAMAP-Rule" id="MF_03119"/>
    </source>
</evidence>
<name>MTNA_TALMQ</name>
<protein>
    <recommendedName>
        <fullName evidence="1">Methylthioribose-1-phosphate isomerase</fullName>
        <shortName evidence="1">M1Pi</shortName>
        <shortName evidence="1">MTR-1-P isomerase</shortName>
        <ecNumber evidence="1">5.3.1.23</ecNumber>
    </recommendedName>
    <alternativeName>
        <fullName evidence="1">S-methyl-5-thioribose-1-phosphate isomerase</fullName>
    </alternativeName>
    <alternativeName>
        <fullName evidence="1">Translation initiation factor eIF-2B subunit alpha/beta/delta-like protein</fullName>
    </alternativeName>
</protein>
<dbReference type="EC" id="5.3.1.23" evidence="1"/>
<dbReference type="EMBL" id="DS995904">
    <property type="protein sequence ID" value="EEA20818.1"/>
    <property type="molecule type" value="Genomic_DNA"/>
</dbReference>
<dbReference type="RefSeq" id="XP_002151818.1">
    <property type="nucleotide sequence ID" value="XM_002151782.1"/>
</dbReference>
<dbReference type="SMR" id="B6QRG1"/>
<dbReference type="STRING" id="441960.B6QRG1"/>
<dbReference type="VEuPathDB" id="FungiDB:PMAA_046370"/>
<dbReference type="HOGENOM" id="CLU_016218_1_3_1"/>
<dbReference type="OrthoDB" id="11864at28568"/>
<dbReference type="PhylomeDB" id="B6QRG1"/>
<dbReference type="UniPathway" id="UPA00904">
    <property type="reaction ID" value="UER00874"/>
</dbReference>
<dbReference type="Proteomes" id="UP000001294">
    <property type="component" value="Unassembled WGS sequence"/>
</dbReference>
<dbReference type="GO" id="GO:0005737">
    <property type="term" value="C:cytoplasm"/>
    <property type="evidence" value="ECO:0007669"/>
    <property type="project" value="UniProtKB-SubCell"/>
</dbReference>
<dbReference type="GO" id="GO:0005634">
    <property type="term" value="C:nucleus"/>
    <property type="evidence" value="ECO:0007669"/>
    <property type="project" value="UniProtKB-SubCell"/>
</dbReference>
<dbReference type="GO" id="GO:0046523">
    <property type="term" value="F:S-methyl-5-thioribose-1-phosphate isomerase activity"/>
    <property type="evidence" value="ECO:0007669"/>
    <property type="project" value="UniProtKB-UniRule"/>
</dbReference>
<dbReference type="GO" id="GO:0019509">
    <property type="term" value="P:L-methionine salvage from methylthioadenosine"/>
    <property type="evidence" value="ECO:0007669"/>
    <property type="project" value="UniProtKB-UniRule"/>
</dbReference>
<dbReference type="FunFam" id="1.20.120.420:FF:000003">
    <property type="entry name" value="Methylthioribose-1-phosphate isomerase"/>
    <property type="match status" value="1"/>
</dbReference>
<dbReference type="FunFam" id="3.40.50.10470:FF:000003">
    <property type="entry name" value="Methylthioribose-1-phosphate isomerase"/>
    <property type="match status" value="1"/>
</dbReference>
<dbReference type="Gene3D" id="1.20.120.420">
    <property type="entry name" value="translation initiation factor eif-2b, domain 1"/>
    <property type="match status" value="1"/>
</dbReference>
<dbReference type="Gene3D" id="3.40.50.10470">
    <property type="entry name" value="Translation initiation factor eif-2b, domain 2"/>
    <property type="match status" value="1"/>
</dbReference>
<dbReference type="HAMAP" id="MF_01678">
    <property type="entry name" value="Salvage_MtnA"/>
    <property type="match status" value="1"/>
</dbReference>
<dbReference type="InterPro" id="IPR000649">
    <property type="entry name" value="IF-2B-related"/>
</dbReference>
<dbReference type="InterPro" id="IPR005251">
    <property type="entry name" value="IF-M1Pi"/>
</dbReference>
<dbReference type="InterPro" id="IPR042529">
    <property type="entry name" value="IF_2B-like_C"/>
</dbReference>
<dbReference type="InterPro" id="IPR011559">
    <property type="entry name" value="Initiation_fac_2B_a/b/d"/>
</dbReference>
<dbReference type="InterPro" id="IPR027363">
    <property type="entry name" value="M1Pi_N"/>
</dbReference>
<dbReference type="InterPro" id="IPR037171">
    <property type="entry name" value="NagB/RpiA_transferase-like"/>
</dbReference>
<dbReference type="NCBIfam" id="TIGR00524">
    <property type="entry name" value="eIF-2B_rel"/>
    <property type="match status" value="1"/>
</dbReference>
<dbReference type="NCBIfam" id="NF004326">
    <property type="entry name" value="PRK05720.1"/>
    <property type="match status" value="1"/>
</dbReference>
<dbReference type="NCBIfam" id="TIGR00512">
    <property type="entry name" value="salvage_mtnA"/>
    <property type="match status" value="1"/>
</dbReference>
<dbReference type="PANTHER" id="PTHR43475">
    <property type="entry name" value="METHYLTHIORIBOSE-1-PHOSPHATE ISOMERASE"/>
    <property type="match status" value="1"/>
</dbReference>
<dbReference type="PANTHER" id="PTHR43475:SF1">
    <property type="entry name" value="METHYLTHIORIBOSE-1-PHOSPHATE ISOMERASE"/>
    <property type="match status" value="1"/>
</dbReference>
<dbReference type="Pfam" id="PF01008">
    <property type="entry name" value="IF-2B"/>
    <property type="match status" value="1"/>
</dbReference>
<dbReference type="SUPFAM" id="SSF100950">
    <property type="entry name" value="NagB/RpiA/CoA transferase-like"/>
    <property type="match status" value="1"/>
</dbReference>
<accession>B6QRG1</accession>
<sequence>MSLQAIKYADNQLQIIDQLQLPFVTEYIPIRSAQDGWHAIKEMRVRGAPAIAIVAILSLAVELSEIQTAGKLSSSSEEVGLFIIEKLHYLVTSRPTAVNLADAARKFETMVTEHTKTQGSTGQSLVAAYLQEAELMLVHDLSDNKNIGAYGAKWILERAATEGQAKVNVLTHCNTGSLATAGYGTALGVIRSLHEGNALNRVYCTETRPYNQGARLTAYELVHEKMPATLITDSMAASLLAKPESKVSAIVVGADRVAANGDTANKIGTYALAVLAKYHGVKFLVAAPRTTIDRGTPSGNEIVIEERAPSEVTTIKGPLQGRVGDALQMETIQLAATGIDVWNPAFDVTPAALIDAVITEKGVVEKGSDGHFHFDALFDESSSS</sequence>
<reference key="1">
    <citation type="journal article" date="2015" name="Genome Announc.">
        <title>Genome sequence of the AIDS-associated pathogen Penicillium marneffei (ATCC18224) and its near taxonomic relative Talaromyces stipitatus (ATCC10500).</title>
        <authorList>
            <person name="Nierman W.C."/>
            <person name="Fedorova-Abrams N.D."/>
            <person name="Andrianopoulos A."/>
        </authorList>
    </citation>
    <scope>NUCLEOTIDE SEQUENCE [LARGE SCALE GENOMIC DNA]</scope>
    <source>
        <strain>ATCC 18224 / CBS 334.59 / QM 7333</strain>
    </source>
</reference>
<proteinExistence type="inferred from homology"/>